<sequence>MIEINVYYKKWYSTIKKPKIFVKNVIKSSLINLNIYEYKPIISIVLANNILLQKLNYEYRNKNKPTNVLSFPYDKLNKKCNLGEIFLSLDTLIEESIDLNIPIEHHTCHMLIHGLLHILDYNHEEPLMQYIMESIEIKLLDKLGIRNPYVSRETIYP</sequence>
<name>YBEY_EHRRG</name>
<organism>
    <name type="scientific">Ehrlichia ruminantium (strain Gardel)</name>
    <dbReference type="NCBI Taxonomy" id="302409"/>
    <lineage>
        <taxon>Bacteria</taxon>
        <taxon>Pseudomonadati</taxon>
        <taxon>Pseudomonadota</taxon>
        <taxon>Alphaproteobacteria</taxon>
        <taxon>Rickettsiales</taxon>
        <taxon>Anaplasmataceae</taxon>
        <taxon>Ehrlichia</taxon>
    </lineage>
</organism>
<evidence type="ECO:0000255" key="1">
    <source>
        <dbReference type="HAMAP-Rule" id="MF_00009"/>
    </source>
</evidence>
<feature type="chain" id="PRO_0000102452" description="Endoribonuclease YbeY">
    <location>
        <begin position="1"/>
        <end position="157"/>
    </location>
</feature>
<feature type="binding site" evidence="1">
    <location>
        <position position="113"/>
    </location>
    <ligand>
        <name>Zn(2+)</name>
        <dbReference type="ChEBI" id="CHEBI:29105"/>
        <note>catalytic</note>
    </ligand>
</feature>
<feature type="binding site" evidence="1">
    <location>
        <position position="117"/>
    </location>
    <ligand>
        <name>Zn(2+)</name>
        <dbReference type="ChEBI" id="CHEBI:29105"/>
        <note>catalytic</note>
    </ligand>
</feature>
<feature type="binding site" evidence="1">
    <location>
        <position position="123"/>
    </location>
    <ligand>
        <name>Zn(2+)</name>
        <dbReference type="ChEBI" id="CHEBI:29105"/>
        <note>catalytic</note>
    </ligand>
</feature>
<comment type="function">
    <text evidence="1">Single strand-specific metallo-endoribonuclease involved in late-stage 70S ribosome quality control and in maturation of the 3' terminus of the 16S rRNA.</text>
</comment>
<comment type="cofactor">
    <cofactor evidence="1">
        <name>Zn(2+)</name>
        <dbReference type="ChEBI" id="CHEBI:29105"/>
    </cofactor>
    <text evidence="1">Binds 1 zinc ion.</text>
</comment>
<comment type="subcellular location">
    <subcellularLocation>
        <location evidence="1">Cytoplasm</location>
    </subcellularLocation>
</comment>
<comment type="similarity">
    <text evidence="1">Belongs to the endoribonuclease YbeY family.</text>
</comment>
<gene>
    <name evidence="1" type="primary">ybeY</name>
    <name type="ordered locus">ERGA_CDS_09240</name>
</gene>
<protein>
    <recommendedName>
        <fullName evidence="1">Endoribonuclease YbeY</fullName>
        <ecNumber evidence="1">3.1.-.-</ecNumber>
    </recommendedName>
</protein>
<accession>Q5FGP9</accession>
<proteinExistence type="inferred from homology"/>
<dbReference type="EC" id="3.1.-.-" evidence="1"/>
<dbReference type="EMBL" id="CR925677">
    <property type="protein sequence ID" value="CAI28376.1"/>
    <property type="molecule type" value="Genomic_DNA"/>
</dbReference>
<dbReference type="RefSeq" id="WP_011255970.1">
    <property type="nucleotide sequence ID" value="NC_006831.1"/>
</dbReference>
<dbReference type="SMR" id="Q5FGP9"/>
<dbReference type="KEGG" id="erg:ERGA_CDS_09240"/>
<dbReference type="HOGENOM" id="CLU_106710_0_0_5"/>
<dbReference type="OrthoDB" id="9807740at2"/>
<dbReference type="Proteomes" id="UP000000533">
    <property type="component" value="Chromosome"/>
</dbReference>
<dbReference type="GO" id="GO:0005737">
    <property type="term" value="C:cytoplasm"/>
    <property type="evidence" value="ECO:0007669"/>
    <property type="project" value="UniProtKB-SubCell"/>
</dbReference>
<dbReference type="GO" id="GO:0004222">
    <property type="term" value="F:metalloendopeptidase activity"/>
    <property type="evidence" value="ECO:0007669"/>
    <property type="project" value="InterPro"/>
</dbReference>
<dbReference type="GO" id="GO:0004521">
    <property type="term" value="F:RNA endonuclease activity"/>
    <property type="evidence" value="ECO:0007669"/>
    <property type="project" value="UniProtKB-UniRule"/>
</dbReference>
<dbReference type="GO" id="GO:0008270">
    <property type="term" value="F:zinc ion binding"/>
    <property type="evidence" value="ECO:0007669"/>
    <property type="project" value="UniProtKB-UniRule"/>
</dbReference>
<dbReference type="GO" id="GO:0006364">
    <property type="term" value="P:rRNA processing"/>
    <property type="evidence" value="ECO:0007669"/>
    <property type="project" value="UniProtKB-UniRule"/>
</dbReference>
<dbReference type="Gene3D" id="3.40.390.30">
    <property type="entry name" value="Metalloproteases ('zincins'), catalytic domain"/>
    <property type="match status" value="1"/>
</dbReference>
<dbReference type="HAMAP" id="MF_00009">
    <property type="entry name" value="Endoribonucl_YbeY"/>
    <property type="match status" value="1"/>
</dbReference>
<dbReference type="InterPro" id="IPR023091">
    <property type="entry name" value="MetalPrtase_cat_dom_sf_prd"/>
</dbReference>
<dbReference type="InterPro" id="IPR002036">
    <property type="entry name" value="YbeY"/>
</dbReference>
<dbReference type="NCBIfam" id="TIGR00043">
    <property type="entry name" value="rRNA maturation RNase YbeY"/>
    <property type="match status" value="1"/>
</dbReference>
<dbReference type="PANTHER" id="PTHR46986">
    <property type="entry name" value="ENDORIBONUCLEASE YBEY, CHLOROPLASTIC"/>
    <property type="match status" value="1"/>
</dbReference>
<dbReference type="PANTHER" id="PTHR46986:SF1">
    <property type="entry name" value="ENDORIBONUCLEASE YBEY, CHLOROPLASTIC"/>
    <property type="match status" value="1"/>
</dbReference>
<dbReference type="Pfam" id="PF02130">
    <property type="entry name" value="YbeY"/>
    <property type="match status" value="1"/>
</dbReference>
<dbReference type="SUPFAM" id="SSF55486">
    <property type="entry name" value="Metalloproteases ('zincins'), catalytic domain"/>
    <property type="match status" value="1"/>
</dbReference>
<keyword id="KW-0963">Cytoplasm</keyword>
<keyword id="KW-0255">Endonuclease</keyword>
<keyword id="KW-0378">Hydrolase</keyword>
<keyword id="KW-0479">Metal-binding</keyword>
<keyword id="KW-0540">Nuclease</keyword>
<keyword id="KW-0690">Ribosome biogenesis</keyword>
<keyword id="KW-0698">rRNA processing</keyword>
<keyword id="KW-0862">Zinc</keyword>
<reference key="1">
    <citation type="journal article" date="2006" name="J. Bacteriol.">
        <title>Comparative genomic analysis of three strains of Ehrlichia ruminantium reveals an active process of genome size plasticity.</title>
        <authorList>
            <person name="Frutos R."/>
            <person name="Viari A."/>
            <person name="Ferraz C."/>
            <person name="Morgat A."/>
            <person name="Eychenie S."/>
            <person name="Kandassamy Y."/>
            <person name="Chantal I."/>
            <person name="Bensaid A."/>
            <person name="Coissac E."/>
            <person name="Vachiery N."/>
            <person name="Demaille J."/>
            <person name="Martinez D."/>
        </authorList>
    </citation>
    <scope>NUCLEOTIDE SEQUENCE [LARGE SCALE GENOMIC DNA]</scope>
    <source>
        <strain>Gardel</strain>
    </source>
</reference>